<proteinExistence type="evidence at protein level"/>
<protein>
    <recommendedName>
        <fullName evidence="5">Phylloseptin-H10</fullName>
        <shortName evidence="5">PLS-H10</shortName>
    </recommendedName>
    <alternativeName>
        <fullName evidence="4">Phylloseptin-12</fullName>
        <shortName evidence="4">PS-12</shortName>
    </alternativeName>
</protein>
<comment type="function">
    <text evidence="1">Has antimicrobial activity.</text>
</comment>
<comment type="subcellular location">
    <subcellularLocation>
        <location evidence="3">Secreted</location>
    </subcellularLocation>
</comment>
<comment type="tissue specificity">
    <text evidence="3">Expressed by the skin glands.</text>
</comment>
<comment type="mass spectrometry" mass="2085.12" error="0.1" method="MALDI" evidence="3"/>
<comment type="similarity">
    <text evidence="2">Belongs to the frog skin active peptide (FSAP) family. Phylloseptin subfamily.</text>
</comment>
<organism>
    <name type="scientific">Pithecopus hypochondrialis</name>
    <name type="common">Orange-legged leaf frog</name>
    <name type="synonym">Phyllomedusa hypochondrialis</name>
    <dbReference type="NCBI Taxonomy" id="317381"/>
    <lineage>
        <taxon>Eukaryota</taxon>
        <taxon>Metazoa</taxon>
        <taxon>Chordata</taxon>
        <taxon>Craniata</taxon>
        <taxon>Vertebrata</taxon>
        <taxon>Euteleostomi</taxon>
        <taxon>Amphibia</taxon>
        <taxon>Batrachia</taxon>
        <taxon>Anura</taxon>
        <taxon>Neobatrachia</taxon>
        <taxon>Hyloidea</taxon>
        <taxon>Hylidae</taxon>
        <taxon>Phyllomedusinae</taxon>
        <taxon>Pithecopus</taxon>
    </lineage>
</organism>
<sequence length="19" mass="2086">FLSLIPHAINAVSALVHHF</sequence>
<evidence type="ECO:0000250" key="1">
    <source>
        <dbReference type="UniProtKB" id="P84567"/>
    </source>
</evidence>
<evidence type="ECO:0000255" key="2"/>
<evidence type="ECO:0000269" key="3">
    <source ref="1"/>
</evidence>
<evidence type="ECO:0000303" key="4">
    <source ref="1"/>
</evidence>
<evidence type="ECO:0000305" key="5"/>
<accession>P84904</accession>
<keyword id="KW-0027">Amidation</keyword>
<keyword id="KW-0878">Amphibian defense peptide</keyword>
<keyword id="KW-0929">Antimicrobial</keyword>
<keyword id="KW-0903">Direct protein sequencing</keyword>
<keyword id="KW-0964">Secreted</keyword>
<reference evidence="5" key="1">
    <citation type="submission" date="2006-07" db="UniProtKB">
        <title>High-throughput co-localization of peptides and proteins by imaging mass spectrometry.</title>
        <authorList>
            <person name="Silva L.P."/>
            <person name="Brand G.D."/>
            <person name="Bloch C. Jr."/>
        </authorList>
    </citation>
    <scope>PROTEIN SEQUENCE</scope>
    <scope>SUBCELLULAR LOCATION</scope>
    <scope>TISSUE SPECIFICITY</scope>
    <scope>MASS SPECTROMETRY</scope>
    <scope>AMIDATION AT PHE-19</scope>
    <source>
        <tissue evidence="3">Skin secretion</tissue>
    </source>
</reference>
<dbReference type="GO" id="GO:0005576">
    <property type="term" value="C:extracellular region"/>
    <property type="evidence" value="ECO:0007669"/>
    <property type="project" value="UniProtKB-SubCell"/>
</dbReference>
<dbReference type="GO" id="GO:0006952">
    <property type="term" value="P:defense response"/>
    <property type="evidence" value="ECO:0007669"/>
    <property type="project" value="UniProtKB-KW"/>
</dbReference>
<name>PLS10_PITHY</name>
<feature type="peptide" id="PRO_0000376044" description="Phylloseptin-H10" evidence="3">
    <location>
        <begin position="1"/>
        <end position="19"/>
    </location>
</feature>
<feature type="modified residue" description="Phenylalanine amide" evidence="3">
    <location>
        <position position="19"/>
    </location>
</feature>